<name>COBS_METBF</name>
<accession>Q465W3</accession>
<organism>
    <name type="scientific">Methanosarcina barkeri (strain Fusaro / DSM 804)</name>
    <dbReference type="NCBI Taxonomy" id="269797"/>
    <lineage>
        <taxon>Archaea</taxon>
        <taxon>Methanobacteriati</taxon>
        <taxon>Methanobacteriota</taxon>
        <taxon>Stenosarchaea group</taxon>
        <taxon>Methanomicrobia</taxon>
        <taxon>Methanosarcinales</taxon>
        <taxon>Methanosarcinaceae</taxon>
        <taxon>Methanosarcina</taxon>
    </lineage>
</organism>
<gene>
    <name evidence="1" type="primary">cobS</name>
    <name type="ordered locus">Mbar_A3456</name>
</gene>
<protein>
    <recommendedName>
        <fullName evidence="1">Adenosylcobinamide-GDP ribazoletransferase</fullName>
        <ecNumber evidence="1">2.7.8.26</ecNumber>
    </recommendedName>
    <alternativeName>
        <fullName evidence="1">Cobalamin synthase</fullName>
    </alternativeName>
    <alternativeName>
        <fullName evidence="1">Cobalamin-5'-phosphate synthase</fullName>
    </alternativeName>
</protein>
<evidence type="ECO:0000255" key="1">
    <source>
        <dbReference type="HAMAP-Rule" id="MF_00719"/>
    </source>
</evidence>
<dbReference type="EC" id="2.7.8.26" evidence="1"/>
<dbReference type="EMBL" id="CP000099">
    <property type="protein sequence ID" value="AAZ72329.1"/>
    <property type="molecule type" value="Genomic_DNA"/>
</dbReference>
<dbReference type="STRING" id="269797.Mbar_A3456"/>
<dbReference type="PaxDb" id="269797-Mbar_A3456"/>
<dbReference type="KEGG" id="mba:Mbar_A3456"/>
<dbReference type="eggNOG" id="arCOG04338">
    <property type="taxonomic scope" value="Archaea"/>
</dbReference>
<dbReference type="HOGENOM" id="CLU_057426_2_0_2"/>
<dbReference type="OrthoDB" id="11748at2157"/>
<dbReference type="BioCyc" id="MetaCyc:MONOMER-20426"/>
<dbReference type="UniPathway" id="UPA00148">
    <property type="reaction ID" value="UER00238"/>
</dbReference>
<dbReference type="GO" id="GO:0005886">
    <property type="term" value="C:plasma membrane"/>
    <property type="evidence" value="ECO:0007669"/>
    <property type="project" value="UniProtKB-SubCell"/>
</dbReference>
<dbReference type="GO" id="GO:0051073">
    <property type="term" value="F:adenosylcobinamide-GDP ribazoletransferase activity"/>
    <property type="evidence" value="ECO:0007669"/>
    <property type="project" value="UniProtKB-UniRule"/>
</dbReference>
<dbReference type="GO" id="GO:0008818">
    <property type="term" value="F:cobalamin 5'-phosphate synthase activity"/>
    <property type="evidence" value="ECO:0007669"/>
    <property type="project" value="UniProtKB-UniRule"/>
</dbReference>
<dbReference type="GO" id="GO:0009236">
    <property type="term" value="P:cobalamin biosynthetic process"/>
    <property type="evidence" value="ECO:0007669"/>
    <property type="project" value="UniProtKB-UniRule"/>
</dbReference>
<dbReference type="HAMAP" id="MF_00719">
    <property type="entry name" value="CobS"/>
    <property type="match status" value="1"/>
</dbReference>
<dbReference type="InterPro" id="IPR003805">
    <property type="entry name" value="CobS"/>
</dbReference>
<dbReference type="NCBIfam" id="TIGR00317">
    <property type="entry name" value="cobS"/>
    <property type="match status" value="1"/>
</dbReference>
<dbReference type="PANTHER" id="PTHR34148">
    <property type="entry name" value="ADENOSYLCOBINAMIDE-GDP RIBAZOLETRANSFERASE"/>
    <property type="match status" value="1"/>
</dbReference>
<dbReference type="PANTHER" id="PTHR34148:SF1">
    <property type="entry name" value="ADENOSYLCOBINAMIDE-GDP RIBAZOLETRANSFERASE"/>
    <property type="match status" value="1"/>
</dbReference>
<dbReference type="Pfam" id="PF02654">
    <property type="entry name" value="CobS"/>
    <property type="match status" value="1"/>
</dbReference>
<keyword id="KW-1003">Cell membrane</keyword>
<keyword id="KW-0169">Cobalamin biosynthesis</keyword>
<keyword id="KW-0460">Magnesium</keyword>
<keyword id="KW-0472">Membrane</keyword>
<keyword id="KW-0808">Transferase</keyword>
<keyword id="KW-0812">Transmembrane</keyword>
<keyword id="KW-1133">Transmembrane helix</keyword>
<proteinExistence type="inferred from homology"/>
<reference key="1">
    <citation type="journal article" date="2006" name="J. Bacteriol.">
        <title>The Methanosarcina barkeri genome: comparative analysis with Methanosarcina acetivorans and Methanosarcina mazei reveals extensive rearrangement within methanosarcinal genomes.</title>
        <authorList>
            <person name="Maeder D.L."/>
            <person name="Anderson I."/>
            <person name="Brettin T.S."/>
            <person name="Bruce D.C."/>
            <person name="Gilna P."/>
            <person name="Han C.S."/>
            <person name="Lapidus A."/>
            <person name="Metcalf W.W."/>
            <person name="Saunders E."/>
            <person name="Tapia R."/>
            <person name="Sowers K.R."/>
        </authorList>
    </citation>
    <scope>NUCLEOTIDE SEQUENCE [LARGE SCALE GENOMIC DNA]</scope>
    <source>
        <strain>Fusaro / DSM 804</strain>
    </source>
</reference>
<comment type="function">
    <text evidence="1">Joins adenosylcobinamide-GDP and alpha-ribazole to generate adenosylcobalamin (Ado-cobalamin). Also synthesizes adenosylcobalamin 5'-phosphate from adenosylcobinamide-GDP and alpha-ribazole 5'-phosphate.</text>
</comment>
<comment type="catalytic activity">
    <reaction evidence="1">
        <text>alpha-ribazole + adenosylcob(III)inamide-GDP = adenosylcob(III)alamin + GMP + H(+)</text>
        <dbReference type="Rhea" id="RHEA:16049"/>
        <dbReference type="ChEBI" id="CHEBI:10329"/>
        <dbReference type="ChEBI" id="CHEBI:15378"/>
        <dbReference type="ChEBI" id="CHEBI:18408"/>
        <dbReference type="ChEBI" id="CHEBI:58115"/>
        <dbReference type="ChEBI" id="CHEBI:60487"/>
        <dbReference type="EC" id="2.7.8.26"/>
    </reaction>
</comment>
<comment type="catalytic activity">
    <reaction evidence="1">
        <text>alpha-ribazole 5'-phosphate + adenosylcob(III)inamide-GDP = adenosylcob(III)alamin 5'-phosphate + GMP + H(+)</text>
        <dbReference type="Rhea" id="RHEA:23560"/>
        <dbReference type="ChEBI" id="CHEBI:15378"/>
        <dbReference type="ChEBI" id="CHEBI:57918"/>
        <dbReference type="ChEBI" id="CHEBI:58115"/>
        <dbReference type="ChEBI" id="CHEBI:60487"/>
        <dbReference type="ChEBI" id="CHEBI:60493"/>
        <dbReference type="EC" id="2.7.8.26"/>
    </reaction>
</comment>
<comment type="cofactor">
    <cofactor evidence="1">
        <name>Mg(2+)</name>
        <dbReference type="ChEBI" id="CHEBI:18420"/>
    </cofactor>
</comment>
<comment type="pathway">
    <text evidence="1">Cofactor biosynthesis; adenosylcobalamin biosynthesis; adenosylcobalamin from cob(II)yrinate a,c-diamide: step 7/7.</text>
</comment>
<comment type="subcellular location">
    <subcellularLocation>
        <location evidence="1">Cell membrane</location>
        <topology evidence="1">Multi-pass membrane protein</topology>
    </subcellularLocation>
</comment>
<comment type="similarity">
    <text evidence="1">Belongs to the CobS family.</text>
</comment>
<sequence>MNSYLLAFKSGFGFLSTIPVGISMEGIDELMKKIYFYPVVGAVLGLLIGAVAFIGQVIFPGPVLAALLMGFIYYITGFNHLDGITDIGDGFMAHGSLEKKIKALKDTTIGTGGVSFCILLLLTLYGSIRAVQQEGSAVFGSNLPVLMFESMFIAEVSAKQSMLTIAAFGKPIPPREKQAYPGLGAMTINGATRKNFLIGFVFGAIVCFLPFGWIGLLPYLGACLVALVILNRSYAHFGGLNGDGIGTANEIGRVTALIILAVLLQLSLNGYMGGFKWTLL</sequence>
<feature type="chain" id="PRO_1000045774" description="Adenosylcobinamide-GDP ribazoletransferase">
    <location>
        <begin position="1"/>
        <end position="280"/>
    </location>
</feature>
<feature type="transmembrane region" description="Helical" evidence="1">
    <location>
        <begin position="4"/>
        <end position="24"/>
    </location>
</feature>
<feature type="transmembrane region" description="Helical" evidence="1">
    <location>
        <begin position="39"/>
        <end position="59"/>
    </location>
</feature>
<feature type="transmembrane region" description="Helical" evidence="1">
    <location>
        <begin position="61"/>
        <end position="81"/>
    </location>
</feature>
<feature type="transmembrane region" description="Helical" evidence="1">
    <location>
        <begin position="108"/>
        <end position="128"/>
    </location>
</feature>
<feature type="transmembrane region" description="Helical" evidence="1">
    <location>
        <begin position="196"/>
        <end position="216"/>
    </location>
</feature>
<feature type="transmembrane region" description="Helical" evidence="1">
    <location>
        <begin position="255"/>
        <end position="275"/>
    </location>
</feature>